<accession>P48268</accession>
<accession>B7U1I0</accession>
<name>PSBE_CHLRE</name>
<proteinExistence type="evidence at protein level"/>
<geneLocation type="chloroplast"/>
<protein>
    <recommendedName>
        <fullName evidence="1">Cytochrome b559 subunit alpha</fullName>
    </recommendedName>
    <alternativeName>
        <fullName evidence="1">PSII reaction center subunit V</fullName>
    </alternativeName>
</protein>
<reference key="1">
    <citation type="journal article" date="1994" name="Biochim. Biophys. Acta">
        <title>Nucleotide sequence of the psbE, psbF and trnM genes from the chloroplast genome of Chlamydomonas reinhardtii.</title>
        <authorList>
            <person name="Alizadeh S."/>
            <person name="Nechustai R."/>
            <person name="Barber J."/>
            <person name="Nixon P."/>
        </authorList>
    </citation>
    <scope>NUCLEOTIDE SEQUENCE [GENOMIC DNA]</scope>
    <source>
        <strain>137c / CC-125</strain>
    </source>
</reference>
<reference key="2">
    <citation type="journal article" date="1995" name="Mol. Gen. Genet.">
        <title>An unusual organization of the genes encoding cytochrome b559 in Chlamydomonas reinhardtii: psbE and psbF genes are separately transcribed from different regions of the plastid chromosome.</title>
        <authorList>
            <person name="Mor T.S."/>
            <person name="Ohad I."/>
            <person name="Hirschberg J."/>
            <person name="Pakrasi H.B."/>
        </authorList>
    </citation>
    <scope>NUCLEOTIDE SEQUENCE [GENOMIC DNA]</scope>
    <source>
        <strain>137c / CC-125</strain>
    </source>
</reference>
<reference key="3">
    <citation type="journal article" date="2009" name="BMC Evol. Biol.">
        <title>Nucleotide diversity of the Chlamydomonas reinhardtii plastid genome: addressing the mutational-hazard hypothesis.</title>
        <authorList>
            <person name="Smith D.R."/>
            <person name="Lee R.W."/>
        </authorList>
    </citation>
    <scope>NUCLEOTIDE SEQUENCE [LARGE SCALE GENOMIC DNA]</scope>
    <source>
        <strain>CC-503</strain>
    </source>
</reference>
<reference key="4">
    <citation type="journal article" date="1991" name="J. Biol. Chem.">
        <title>Photosystem II particles from Chlamydomonas reinhardtii. Purification, molecular weight, small subunit composition, and protein phosphorylation.</title>
        <authorList>
            <person name="de Vitry C."/>
            <person name="Diner B.A."/>
            <person name="Popo J.-L."/>
        </authorList>
    </citation>
    <scope>PROTEIN SEQUENCE OF 2-13</scope>
    <scope>SUBUNIT</scope>
    <scope>SUBCELLULAR LOCATION</scope>
</reference>
<reference key="5">
    <citation type="journal article" date="2002" name="Plant Cell">
        <title>The Chlamydomonas reinhardtii plastid chromosome: islands of genes in a sea of repeats.</title>
        <authorList>
            <person name="Maul J.E."/>
            <person name="Lilly J.W."/>
            <person name="Cui L."/>
            <person name="dePamphilis C.W."/>
            <person name="Miller W."/>
            <person name="Harris E.H."/>
            <person name="Stern D.B."/>
        </authorList>
    </citation>
    <scope>IDENTIFICATION</scope>
    <scope>COMPLETE PLASTID GENOME</scope>
</reference>
<evidence type="ECO:0000255" key="1">
    <source>
        <dbReference type="HAMAP-Rule" id="MF_00642"/>
    </source>
</evidence>
<evidence type="ECO:0000269" key="2">
    <source>
    </source>
</evidence>
<evidence type="ECO:0007829" key="3">
    <source>
        <dbReference type="PDB" id="8KDE"/>
    </source>
</evidence>
<organism>
    <name type="scientific">Chlamydomonas reinhardtii</name>
    <name type="common">Chlamydomonas smithii</name>
    <dbReference type="NCBI Taxonomy" id="3055"/>
    <lineage>
        <taxon>Eukaryota</taxon>
        <taxon>Viridiplantae</taxon>
        <taxon>Chlorophyta</taxon>
        <taxon>core chlorophytes</taxon>
        <taxon>Chlorophyceae</taxon>
        <taxon>CS clade</taxon>
        <taxon>Chlamydomonadales</taxon>
        <taxon>Chlamydomonadaceae</taxon>
        <taxon>Chlamydomonas</taxon>
    </lineage>
</organism>
<comment type="function">
    <text evidence="1">This b-type cytochrome is tightly associated with the reaction center of photosystem II (PSII). PSII is a light-driven water:plastoquinone oxidoreductase that uses light energy to abstract electrons from H(2)O, generating O(2) and a proton gradient subsequently used for ATP formation. It consists of a core antenna complex that captures photons, and an electron transfer chain that converts photonic excitation into a charge separation.</text>
</comment>
<comment type="cofactor">
    <cofactor evidence="1">
        <name>heme b</name>
        <dbReference type="ChEBI" id="CHEBI:60344"/>
    </cofactor>
    <text evidence="1">With its partner (PsbF) binds heme. PSII binds additional chlorophylls, carotenoids and specific lipids.</text>
</comment>
<comment type="subunit">
    <text evidence="1 2">Heterodimer of an alpha subunit and a beta subunit. PSII is composed of 1 copy each of membrane proteins PsbA, PsbB, PsbC, PsbD, PsbE, PsbF, PsbH, PsbI, PsbJ, PsbK, PsbL, PsbM, PsbT, PsbX, PsbY, PsbZ, Psb30/Ycf12, at least 3 peripheral proteins of the oxygen-evolving complex and a large number of cofactors. It forms dimeric complexes.</text>
</comment>
<comment type="subcellular location">
    <subcellularLocation>
        <location evidence="1 2">Plastid</location>
        <location evidence="1 2">Chloroplast thylakoid membrane</location>
        <topology evidence="1">Single-pass membrane protein</topology>
    </subcellularLocation>
</comment>
<comment type="similarity">
    <text evidence="1">Belongs to the PsbE/PsbF family.</text>
</comment>
<gene>
    <name evidence="1" type="primary">psbE</name>
</gene>
<keyword id="KW-0002">3D-structure</keyword>
<keyword id="KW-0150">Chloroplast</keyword>
<keyword id="KW-0903">Direct protein sequencing</keyword>
<keyword id="KW-0249">Electron transport</keyword>
<keyword id="KW-0349">Heme</keyword>
<keyword id="KW-0408">Iron</keyword>
<keyword id="KW-0472">Membrane</keyword>
<keyword id="KW-0479">Metal-binding</keyword>
<keyword id="KW-0602">Photosynthesis</keyword>
<keyword id="KW-0604">Photosystem II</keyword>
<keyword id="KW-0934">Plastid</keyword>
<keyword id="KW-1185">Reference proteome</keyword>
<keyword id="KW-0793">Thylakoid</keyword>
<keyword id="KW-0812">Transmembrane</keyword>
<keyword id="KW-1133">Transmembrane helix</keyword>
<keyword id="KW-0813">Transport</keyword>
<feature type="initiator methionine" description="Removed" evidence="2">
    <location>
        <position position="1"/>
    </location>
</feature>
<feature type="chain" id="PRO_0000200304" description="Cytochrome b559 subunit alpha">
    <location>
        <begin position="2"/>
        <end position="82"/>
    </location>
</feature>
<feature type="transmembrane region" description="Helical" evidence="1">
    <location>
        <begin position="21"/>
        <end position="35"/>
    </location>
</feature>
<feature type="binding site" description="axial binding residue" evidence="1">
    <location>
        <position position="23"/>
    </location>
    <ligand>
        <name>heme</name>
        <dbReference type="ChEBI" id="CHEBI:30413"/>
        <note>ligand shared with beta subunit</note>
    </ligand>
    <ligandPart>
        <name>Fe</name>
        <dbReference type="ChEBI" id="CHEBI:18248"/>
    </ligandPart>
</feature>
<feature type="helix" evidence="3">
    <location>
        <begin position="10"/>
        <end position="15"/>
    </location>
</feature>
<feature type="helix" evidence="3">
    <location>
        <begin position="17"/>
        <end position="39"/>
    </location>
</feature>
<feature type="helix" evidence="3">
    <location>
        <begin position="42"/>
        <end position="47"/>
    </location>
</feature>
<feature type="strand" evidence="3">
    <location>
        <begin position="54"/>
        <end position="56"/>
    </location>
</feature>
<feature type="helix" evidence="3">
    <location>
        <begin position="72"/>
        <end position="79"/>
    </location>
</feature>
<sequence length="82" mass="9304">MAGKPVERPFSDILTSIRYWVIHSITVPALFIAGWLFVSTGLAYDVFGTPRPNEYFTEDRQEAPLITDRFNALEQVKKLSGN</sequence>
<dbReference type="EMBL" id="X80196">
    <property type="protein sequence ID" value="CAA56487.1"/>
    <property type="molecule type" value="Genomic_DNA"/>
</dbReference>
<dbReference type="EMBL" id="X79565">
    <property type="protein sequence ID" value="CAA56102.1"/>
    <property type="molecule type" value="Genomic_DNA"/>
</dbReference>
<dbReference type="EMBL" id="FJ423446">
    <property type="protein sequence ID" value="ACJ50127.1"/>
    <property type="molecule type" value="Genomic_DNA"/>
</dbReference>
<dbReference type="EMBL" id="BK000554">
    <property type="protein sequence ID" value="DAA00941.1"/>
    <property type="molecule type" value="Genomic_DNA"/>
</dbReference>
<dbReference type="PIR" id="S53882">
    <property type="entry name" value="S53882"/>
</dbReference>
<dbReference type="RefSeq" id="NP_958396.1">
    <property type="nucleotide sequence ID" value="NC_005353.1"/>
</dbReference>
<dbReference type="PDB" id="6KAC">
    <property type="method" value="EM"/>
    <property type="resolution" value="2.70 A"/>
    <property type="chains" value="E/e=1-82"/>
</dbReference>
<dbReference type="PDB" id="6KAD">
    <property type="method" value="EM"/>
    <property type="resolution" value="3.40 A"/>
    <property type="chains" value="E/e=1-82"/>
</dbReference>
<dbReference type="PDB" id="6KAF">
    <property type="method" value="EM"/>
    <property type="resolution" value="3.73 A"/>
    <property type="chains" value="E/e=1-82"/>
</dbReference>
<dbReference type="PDB" id="8KDE">
    <property type="method" value="EM"/>
    <property type="resolution" value="2.60 A"/>
    <property type="chains" value="E=1-82"/>
</dbReference>
<dbReference type="PDB" id="8R2I">
    <property type="method" value="EM"/>
    <property type="resolution" value="2.90 A"/>
    <property type="chains" value="E=7-82"/>
</dbReference>
<dbReference type="PDB" id="8ZEE">
    <property type="method" value="EM"/>
    <property type="resolution" value="2.90 A"/>
    <property type="chains" value="E=1-82"/>
</dbReference>
<dbReference type="PDBsum" id="6KAC"/>
<dbReference type="PDBsum" id="6KAD"/>
<dbReference type="PDBsum" id="6KAF"/>
<dbReference type="PDBsum" id="8KDE"/>
<dbReference type="PDBsum" id="8R2I"/>
<dbReference type="PDBsum" id="8ZEE"/>
<dbReference type="EMDB" id="EMD-18848"/>
<dbReference type="EMDB" id="EMD-37133"/>
<dbReference type="EMDB" id="EMD-60026"/>
<dbReference type="EMDB" id="EMD-9955"/>
<dbReference type="EMDB" id="EMD-9956"/>
<dbReference type="EMDB" id="EMD-9957"/>
<dbReference type="SMR" id="P48268"/>
<dbReference type="FunCoup" id="P48268">
    <property type="interactions" value="20"/>
</dbReference>
<dbReference type="STRING" id="3055.P48268"/>
<dbReference type="PaxDb" id="3055-DAA00941"/>
<dbReference type="GeneID" id="2716990"/>
<dbReference type="KEGG" id="cre:ChreCp040"/>
<dbReference type="eggNOG" id="ENOG502S3QA">
    <property type="taxonomic scope" value="Eukaryota"/>
</dbReference>
<dbReference type="HOGENOM" id="CLU_194095_0_0_1"/>
<dbReference type="InParanoid" id="P48268"/>
<dbReference type="BioCyc" id="CHLAMY:CHRECP040-MONOMER"/>
<dbReference type="BioCyc" id="MetaCyc:CHRECP040-MONOMER"/>
<dbReference type="Proteomes" id="UP000006906">
    <property type="component" value="Chloroplast"/>
</dbReference>
<dbReference type="GO" id="GO:0009535">
    <property type="term" value="C:chloroplast thylakoid membrane"/>
    <property type="evidence" value="ECO:0007669"/>
    <property type="project" value="UniProtKB-SubCell"/>
</dbReference>
<dbReference type="GO" id="GO:0009539">
    <property type="term" value="C:photosystem II reaction center"/>
    <property type="evidence" value="ECO:0007669"/>
    <property type="project" value="InterPro"/>
</dbReference>
<dbReference type="GO" id="GO:0009055">
    <property type="term" value="F:electron transfer activity"/>
    <property type="evidence" value="ECO:0007669"/>
    <property type="project" value="UniProtKB-UniRule"/>
</dbReference>
<dbReference type="GO" id="GO:0020037">
    <property type="term" value="F:heme binding"/>
    <property type="evidence" value="ECO:0007669"/>
    <property type="project" value="InterPro"/>
</dbReference>
<dbReference type="GO" id="GO:0005506">
    <property type="term" value="F:iron ion binding"/>
    <property type="evidence" value="ECO:0007669"/>
    <property type="project" value="UniProtKB-UniRule"/>
</dbReference>
<dbReference type="GO" id="GO:0009767">
    <property type="term" value="P:photosynthetic electron transport chain"/>
    <property type="evidence" value="ECO:0007669"/>
    <property type="project" value="InterPro"/>
</dbReference>
<dbReference type="Gene3D" id="1.20.5.860">
    <property type="entry name" value="Photosystem II cytochrome b559, alpha subunit"/>
    <property type="match status" value="1"/>
</dbReference>
<dbReference type="HAMAP" id="MF_00642">
    <property type="entry name" value="PSII_PsbE"/>
    <property type="match status" value="1"/>
</dbReference>
<dbReference type="InterPro" id="IPR006217">
    <property type="entry name" value="PSII_cyt_b559_asu"/>
</dbReference>
<dbReference type="InterPro" id="IPR037025">
    <property type="entry name" value="PSII_cyt_b559_asu_sf"/>
</dbReference>
<dbReference type="InterPro" id="IPR006216">
    <property type="entry name" value="PSII_cyt_b559_CS"/>
</dbReference>
<dbReference type="InterPro" id="IPR013081">
    <property type="entry name" value="PSII_cyt_b559_N"/>
</dbReference>
<dbReference type="InterPro" id="IPR013082">
    <property type="entry name" value="PSII_cytb559_asu_lum"/>
</dbReference>
<dbReference type="NCBIfam" id="TIGR01332">
    <property type="entry name" value="cyt_b559_alpha"/>
    <property type="match status" value="1"/>
</dbReference>
<dbReference type="PANTHER" id="PTHR33391">
    <property type="entry name" value="CYTOCHROME B559 SUBUNIT BETA-RELATED"/>
    <property type="match status" value="1"/>
</dbReference>
<dbReference type="PANTHER" id="PTHR33391:SF9">
    <property type="entry name" value="CYTOCHROME B559 SUBUNIT BETA-RELATED"/>
    <property type="match status" value="1"/>
</dbReference>
<dbReference type="Pfam" id="PF00283">
    <property type="entry name" value="Cytochrom_B559"/>
    <property type="match status" value="1"/>
</dbReference>
<dbReference type="Pfam" id="PF00284">
    <property type="entry name" value="Cytochrom_B559a"/>
    <property type="match status" value="1"/>
</dbReference>
<dbReference type="PIRSF" id="PIRSF000036">
    <property type="entry name" value="PsbE"/>
    <property type="match status" value="1"/>
</dbReference>
<dbReference type="SUPFAM" id="SSF161045">
    <property type="entry name" value="Cytochrome b559 subunits"/>
    <property type="match status" value="1"/>
</dbReference>
<dbReference type="PROSITE" id="PS00537">
    <property type="entry name" value="CYTOCHROME_B559"/>
    <property type="match status" value="1"/>
</dbReference>